<name>MANBA_ASPFN</name>
<comment type="function">
    <text evidence="1">Exoglycosidase that cleaves the single beta-linked mannose residue from the non-reducing end of beta-mannosidic oligosaccharides of various complexity and length. Involved in the degradation of polymeric mannan and galactomannan (By similarity).</text>
</comment>
<comment type="catalytic activity">
    <reaction>
        <text>Hydrolysis of terminal, non-reducing beta-D-mannose residues in beta-D-mannosides.</text>
        <dbReference type="EC" id="3.2.1.25"/>
    </reaction>
</comment>
<comment type="pathway">
    <text>Glycan metabolism; N-glycan degradation.</text>
</comment>
<comment type="subunit">
    <text evidence="1">Homodimer.</text>
</comment>
<comment type="subcellular location">
    <subcellularLocation>
        <location evidence="1">Secreted</location>
    </subcellularLocation>
</comment>
<comment type="similarity">
    <text evidence="3">Belongs to the glycosyl hydrolase 2 family. Beta-mannosidase A subfamily.</text>
</comment>
<organism>
    <name type="scientific">Aspergillus flavus (strain ATCC 200026 / FGSC A1120 / IAM 13836 / NRRL 3357 / JCM 12722 / SRRC 167)</name>
    <dbReference type="NCBI Taxonomy" id="332952"/>
    <lineage>
        <taxon>Eukaryota</taxon>
        <taxon>Fungi</taxon>
        <taxon>Dikarya</taxon>
        <taxon>Ascomycota</taxon>
        <taxon>Pezizomycotina</taxon>
        <taxon>Eurotiomycetes</taxon>
        <taxon>Eurotiomycetidae</taxon>
        <taxon>Eurotiales</taxon>
        <taxon>Aspergillaceae</taxon>
        <taxon>Aspergillus</taxon>
        <taxon>Aspergillus subgen. Circumdati</taxon>
    </lineage>
</organism>
<dbReference type="EC" id="3.2.1.25"/>
<dbReference type="EMBL" id="EQ963481">
    <property type="protein sequence ID" value="EED48638.1"/>
    <property type="molecule type" value="Genomic_DNA"/>
</dbReference>
<dbReference type="RefSeq" id="XP_002382054.1">
    <property type="nucleotide sequence ID" value="XM_002382013.1"/>
</dbReference>
<dbReference type="SMR" id="B8NP78"/>
<dbReference type="STRING" id="332952.B8NP78"/>
<dbReference type="GlyCosmos" id="B8NP78">
    <property type="glycosylation" value="15 sites, No reported glycans"/>
</dbReference>
<dbReference type="EnsemblFungi" id="EED48638">
    <property type="protein sequence ID" value="EED48638"/>
    <property type="gene ID" value="AFLA_128610"/>
</dbReference>
<dbReference type="VEuPathDB" id="FungiDB:AFLA_012680"/>
<dbReference type="eggNOG" id="KOG2230">
    <property type="taxonomic scope" value="Eukaryota"/>
</dbReference>
<dbReference type="HOGENOM" id="CLU_005015_3_0_1"/>
<dbReference type="OMA" id="PWKPAYI"/>
<dbReference type="UniPathway" id="UPA00280"/>
<dbReference type="GO" id="GO:0005576">
    <property type="term" value="C:extracellular region"/>
    <property type="evidence" value="ECO:0007669"/>
    <property type="project" value="UniProtKB-SubCell"/>
</dbReference>
<dbReference type="GO" id="GO:0004567">
    <property type="term" value="F:beta-mannosidase activity"/>
    <property type="evidence" value="ECO:0007669"/>
    <property type="project" value="UniProtKB-EC"/>
</dbReference>
<dbReference type="GO" id="GO:0006516">
    <property type="term" value="P:glycoprotein catabolic process"/>
    <property type="evidence" value="ECO:0007669"/>
    <property type="project" value="TreeGrafter"/>
</dbReference>
<dbReference type="GO" id="GO:0000272">
    <property type="term" value="P:polysaccharide catabolic process"/>
    <property type="evidence" value="ECO:0007669"/>
    <property type="project" value="UniProtKB-KW"/>
</dbReference>
<dbReference type="FunFam" id="2.60.40.10:FF:001511">
    <property type="entry name" value="Beta-mannosidase A"/>
    <property type="match status" value="1"/>
</dbReference>
<dbReference type="FunFam" id="2.60.40.10:FF:002310">
    <property type="entry name" value="Beta-mannosidase A"/>
    <property type="match status" value="1"/>
</dbReference>
<dbReference type="FunFam" id="3.20.20.80:FF:000084">
    <property type="entry name" value="Beta-mannosidase A"/>
    <property type="match status" value="1"/>
</dbReference>
<dbReference type="Gene3D" id="2.60.120.260">
    <property type="entry name" value="Galactose-binding domain-like"/>
    <property type="match status" value="1"/>
</dbReference>
<dbReference type="Gene3D" id="3.20.20.80">
    <property type="entry name" value="Glycosidases"/>
    <property type="match status" value="1"/>
</dbReference>
<dbReference type="Gene3D" id="2.60.40.10">
    <property type="entry name" value="Immunoglobulins"/>
    <property type="match status" value="3"/>
</dbReference>
<dbReference type="InterPro" id="IPR036156">
    <property type="entry name" value="Beta-gal/glucu_dom_sf"/>
</dbReference>
<dbReference type="InterPro" id="IPR054593">
    <property type="entry name" value="Beta-mannosidase-like_N2"/>
</dbReference>
<dbReference type="InterPro" id="IPR050887">
    <property type="entry name" value="Beta-mannosidase_GH2"/>
</dbReference>
<dbReference type="InterPro" id="IPR041625">
    <property type="entry name" value="Beta-mannosidase_Ig"/>
</dbReference>
<dbReference type="InterPro" id="IPR008979">
    <property type="entry name" value="Galactose-bd-like_sf"/>
</dbReference>
<dbReference type="InterPro" id="IPR006102">
    <property type="entry name" value="Glyco_hydro_2_Ig-like"/>
</dbReference>
<dbReference type="InterPro" id="IPR017853">
    <property type="entry name" value="Glycoside_hydrolase_SF"/>
</dbReference>
<dbReference type="InterPro" id="IPR013783">
    <property type="entry name" value="Ig-like_fold"/>
</dbReference>
<dbReference type="InterPro" id="IPR041447">
    <property type="entry name" value="Mannosidase_ig"/>
</dbReference>
<dbReference type="PANTHER" id="PTHR43730">
    <property type="entry name" value="BETA-MANNOSIDASE"/>
    <property type="match status" value="1"/>
</dbReference>
<dbReference type="PANTHER" id="PTHR43730:SF5">
    <property type="entry name" value="BETA-MANNOSIDASE A"/>
    <property type="match status" value="1"/>
</dbReference>
<dbReference type="Pfam" id="PF00703">
    <property type="entry name" value="Glyco_hydro_2"/>
    <property type="match status" value="1"/>
</dbReference>
<dbReference type="Pfam" id="PF22666">
    <property type="entry name" value="Glyco_hydro_2_N2"/>
    <property type="match status" value="2"/>
</dbReference>
<dbReference type="Pfam" id="PF17753">
    <property type="entry name" value="Ig_mannosidase"/>
    <property type="match status" value="1"/>
</dbReference>
<dbReference type="Pfam" id="PF17786">
    <property type="entry name" value="Mannosidase_ig"/>
    <property type="match status" value="1"/>
</dbReference>
<dbReference type="SUPFAM" id="SSF51445">
    <property type="entry name" value="(Trans)glycosidases"/>
    <property type="match status" value="1"/>
</dbReference>
<dbReference type="SUPFAM" id="SSF49303">
    <property type="entry name" value="beta-Galactosidase/glucuronidase domain"/>
    <property type="match status" value="2"/>
</dbReference>
<dbReference type="SUPFAM" id="SSF49785">
    <property type="entry name" value="Galactose-binding domain-like"/>
    <property type="match status" value="1"/>
</dbReference>
<feature type="signal peptide" evidence="2">
    <location>
        <begin position="1"/>
        <end position="20"/>
    </location>
</feature>
<feature type="chain" id="PRO_0000394645" description="Beta-mannosidase A">
    <location>
        <begin position="21"/>
        <end position="914"/>
    </location>
</feature>
<feature type="active site" description="Proton donor" evidence="1">
    <location>
        <position position="462"/>
    </location>
</feature>
<feature type="glycosylation site" description="N-linked (GlcNAc...) asparagine" evidence="2">
    <location>
        <position position="39"/>
    </location>
</feature>
<feature type="glycosylation site" description="N-linked (GlcNAc...) asparagine" evidence="2">
    <location>
        <position position="79"/>
    </location>
</feature>
<feature type="glycosylation site" description="N-linked (GlcNAc...) asparagine" evidence="2">
    <location>
        <position position="230"/>
    </location>
</feature>
<feature type="glycosylation site" description="N-linked (GlcNAc...) asparagine" evidence="2">
    <location>
        <position position="265"/>
    </location>
</feature>
<feature type="glycosylation site" description="N-linked (GlcNAc...) asparagine" evidence="2">
    <location>
        <position position="299"/>
    </location>
</feature>
<feature type="glycosylation site" description="N-linked (GlcNAc...) asparagine" evidence="2">
    <location>
        <position position="309"/>
    </location>
</feature>
<feature type="glycosylation site" description="N-linked (GlcNAc...) asparagine" evidence="2">
    <location>
        <position position="330"/>
    </location>
</feature>
<feature type="glycosylation site" description="N-linked (GlcNAc...) asparagine" evidence="2">
    <location>
        <position position="591"/>
    </location>
</feature>
<feature type="glycosylation site" description="N-linked (GlcNAc...) asparagine" evidence="2">
    <location>
        <position position="614"/>
    </location>
</feature>
<feature type="glycosylation site" description="N-linked (GlcNAc...) asparagine" evidence="2">
    <location>
        <position position="641"/>
    </location>
</feature>
<feature type="glycosylation site" description="N-linked (GlcNAc...) asparagine" evidence="2">
    <location>
        <position position="721"/>
    </location>
</feature>
<feature type="glycosylation site" description="N-linked (GlcNAc...) asparagine" evidence="2">
    <location>
        <position position="744"/>
    </location>
</feature>
<feature type="glycosylation site" description="N-linked (GlcNAc...) asparagine" evidence="2">
    <location>
        <position position="773"/>
    </location>
</feature>
<feature type="glycosylation site" description="N-linked (GlcNAc...) asparagine" evidence="2">
    <location>
        <position position="784"/>
    </location>
</feature>
<feature type="glycosylation site" description="N-linked (GlcNAc...) asparagine" evidence="2">
    <location>
        <position position="909"/>
    </location>
</feature>
<protein>
    <recommendedName>
        <fullName>Beta-mannosidase A</fullName>
        <ecNumber>3.2.1.25</ecNumber>
    </recommendedName>
    <alternativeName>
        <fullName>Mannanase A</fullName>
        <shortName>Mannase A</shortName>
    </alternativeName>
</protein>
<keyword id="KW-0119">Carbohydrate metabolism</keyword>
<keyword id="KW-0325">Glycoprotein</keyword>
<keyword id="KW-0326">Glycosidase</keyword>
<keyword id="KW-0378">Hydrolase</keyword>
<keyword id="KW-0624">Polysaccharide degradation</keyword>
<keyword id="KW-0964">Secreted</keyword>
<keyword id="KW-0732">Signal</keyword>
<accession>B8NP78</accession>
<sequence length="914" mass="102929">MRFTATAAALVASSIPATLGQHVRDLSNEKWTLSSDALNHTVPGNLPSHAHLDLLKAGVIDDPYHGLNDFNLRWIPESNWTYTTDKIKDLMPIEFCGKYVASTNNQYRQYSFDVSQILEGCNEDPILKIDFGSAPNIVNAIAEDRNSPVWPDGIQQTYEYPNRWFMRKEQSDFGWDWGPAFAPAGPWKPAYIVQLPKAQNIHVLNTDLDIYRKGQINHLPPDQSQPWVVNASIDFVGSLPPNPSMSIEFKDTKSGEILTSKRIGNVTVSGNSVTGVTVLGGVTPKLWWPLGLGDQNLYNITVTVTGHQNQTLAHVTKRTGFRTIFLNQRNITDAQLAQGIAPGANWHFEVNGHEFYAKGSNIIPPDAFWPRVTEARMARLFDAVVAGNQNMLRVWSSGIYLHDFIYDLADERGILLWSEFEFSDALYPVDDAFLDNIAAEVVYNVRRVNHHPSLALWAGGNEIESLMLPTVERKAPEEYAKYVGEYEKLYISLILPLVYQNTRSITYSPSSTTEGYLDVDLSAPVPMVERYHNTTPGSYYGDTDFYNYDSSVSFNSHVYPVGRFANEFGYHSMPSLQTWQQAVDPEDLHFNSTTVMLRNHHYPAGGTFTDNFHNTSLGMGEMTIAVQRYYPIPNKLDSVANFSAWCHATQLFQADMYKSEIQFYRRGSGMPERQLGSLYWQLEDIWQAPSWAGIEYGGRWKVLHYVSRDIYQRIIVSPFWNYTTGDLDLYVTSDLWESAKGKVNLTWLDLSGTPLPHNAGTPGSVPFNVGALNTTKIYSTNIKNLTLPNPKDAILVLSLSGEGHLPNSDKKTTFTHQNHFTPVFPKDLALVDPGLELSYNTKSKTFTVEAKSGVSLYTWLDYPADVVGYFDENAFVLLPGQKKEIGFTVQEDNTDGKWVQGVTVQSLWNQTLEK</sequence>
<proteinExistence type="inferred from homology"/>
<gene>
    <name type="primary">mndA</name>
    <name type="ORF">AFLA_128610</name>
</gene>
<evidence type="ECO:0000250" key="1"/>
<evidence type="ECO:0000255" key="2"/>
<evidence type="ECO:0000305" key="3"/>
<reference key="1">
    <citation type="journal article" date="2015" name="Genome Announc.">
        <title>Genome sequence of Aspergillus flavus NRRL 3357, a strain that causes aflatoxin contamination of food and feed.</title>
        <authorList>
            <person name="Nierman W.C."/>
            <person name="Yu J."/>
            <person name="Fedorova-Abrams N.D."/>
            <person name="Losada L."/>
            <person name="Cleveland T.E."/>
            <person name="Bhatnagar D."/>
            <person name="Bennett J.W."/>
            <person name="Dean R."/>
            <person name="Payne G.A."/>
        </authorList>
    </citation>
    <scope>NUCLEOTIDE SEQUENCE [LARGE SCALE GENOMIC DNA]</scope>
    <source>
        <strain>ATCC 200026 / FGSC A1120 / IAM 13836 / NRRL 3357 / JCM 12722 / SRRC 167</strain>
    </source>
</reference>